<comment type="function">
    <text evidence="1">Catalyzes the reversible transfer of the terminal phosphate group between ATP and AMP. Plays an important role in cellular energy homeostasis and in adenine nucleotide metabolism.</text>
</comment>
<comment type="catalytic activity">
    <reaction evidence="1">
        <text>AMP + ATP = 2 ADP</text>
        <dbReference type="Rhea" id="RHEA:12973"/>
        <dbReference type="ChEBI" id="CHEBI:30616"/>
        <dbReference type="ChEBI" id="CHEBI:456215"/>
        <dbReference type="ChEBI" id="CHEBI:456216"/>
        <dbReference type="EC" id="2.7.4.3"/>
    </reaction>
</comment>
<comment type="pathway">
    <text evidence="1">Purine metabolism; AMP biosynthesis via salvage pathway; AMP from ADP: step 1/1.</text>
</comment>
<comment type="subunit">
    <text evidence="1">Monomer.</text>
</comment>
<comment type="subcellular location">
    <subcellularLocation>
        <location evidence="1">Cytoplasm</location>
    </subcellularLocation>
</comment>
<comment type="domain">
    <text evidence="1">Consists of three domains, a large central CORE domain and two small peripheral domains, NMPbind and LID, which undergo movements during catalysis. The LID domain closes over the site of phosphoryl transfer upon ATP binding. Assembling and dissambling the active center during each catalytic cycle provides an effective means to prevent ATP hydrolysis.</text>
</comment>
<comment type="similarity">
    <text evidence="1">Belongs to the adenylate kinase family.</text>
</comment>
<proteinExistence type="inferred from homology"/>
<protein>
    <recommendedName>
        <fullName evidence="1">Adenylate kinase</fullName>
        <shortName evidence="1">AK</shortName>
        <ecNumber evidence="1">2.7.4.3</ecNumber>
    </recommendedName>
    <alternativeName>
        <fullName evidence="1">ATP-AMP transphosphorylase</fullName>
    </alternativeName>
    <alternativeName>
        <fullName evidence="1">ATP:AMP phosphotransferase</fullName>
    </alternativeName>
    <alternativeName>
        <fullName evidence="1">Adenylate monophosphate kinase</fullName>
    </alternativeName>
</protein>
<sequence length="220" mass="24180">MRLILLGAPGAGKGTQANFIKEKFGIPQISTGDMLRAAVKAGTPLGVEAKGYMDAGKLVPDALIIGLVKERLKESDCANGYLFDGFPRTIAQADAMKEAGVAIDYVLEIDVPFSEIIERMSGRRTHPASGRTYHVKFNPPKVEGHDDVTGEPLIQRDDDKEETVKKRLEVYEAQTKPLITYYGDWAQRGEENGLKAPQYRKISGLGSVEEIRERAFGALK</sequence>
<organism>
    <name type="scientific">Burkholderia lata (strain ATCC 17760 / DSM 23089 / LMG 22485 / NCIMB 9086 / R18194 / 383)</name>
    <dbReference type="NCBI Taxonomy" id="482957"/>
    <lineage>
        <taxon>Bacteria</taxon>
        <taxon>Pseudomonadati</taxon>
        <taxon>Pseudomonadota</taxon>
        <taxon>Betaproteobacteria</taxon>
        <taxon>Burkholderiales</taxon>
        <taxon>Burkholderiaceae</taxon>
        <taxon>Burkholderia</taxon>
        <taxon>Burkholderia cepacia complex</taxon>
    </lineage>
</organism>
<accession>Q39DJ3</accession>
<dbReference type="EC" id="2.7.4.3" evidence="1"/>
<dbReference type="EMBL" id="CP000151">
    <property type="protein sequence ID" value="ABB09473.1"/>
    <property type="molecule type" value="Genomic_DNA"/>
</dbReference>
<dbReference type="RefSeq" id="WP_011352990.1">
    <property type="nucleotide sequence ID" value="NZ_CP013404.1"/>
</dbReference>
<dbReference type="SMR" id="Q39DJ3"/>
<dbReference type="GeneID" id="93191023"/>
<dbReference type="KEGG" id="bur:Bcep18194_A5879"/>
<dbReference type="HOGENOM" id="CLU_032354_1_2_4"/>
<dbReference type="UniPathway" id="UPA00588">
    <property type="reaction ID" value="UER00649"/>
</dbReference>
<dbReference type="Proteomes" id="UP000002705">
    <property type="component" value="Chromosome 1"/>
</dbReference>
<dbReference type="GO" id="GO:0005737">
    <property type="term" value="C:cytoplasm"/>
    <property type="evidence" value="ECO:0007669"/>
    <property type="project" value="UniProtKB-SubCell"/>
</dbReference>
<dbReference type="GO" id="GO:0004017">
    <property type="term" value="F:adenylate kinase activity"/>
    <property type="evidence" value="ECO:0007669"/>
    <property type="project" value="UniProtKB-UniRule"/>
</dbReference>
<dbReference type="GO" id="GO:0005524">
    <property type="term" value="F:ATP binding"/>
    <property type="evidence" value="ECO:0007669"/>
    <property type="project" value="UniProtKB-UniRule"/>
</dbReference>
<dbReference type="GO" id="GO:0044209">
    <property type="term" value="P:AMP salvage"/>
    <property type="evidence" value="ECO:0007669"/>
    <property type="project" value="UniProtKB-UniRule"/>
</dbReference>
<dbReference type="CDD" id="cd01428">
    <property type="entry name" value="ADK"/>
    <property type="match status" value="1"/>
</dbReference>
<dbReference type="FunFam" id="3.40.50.300:FF:000106">
    <property type="entry name" value="Adenylate kinase mitochondrial"/>
    <property type="match status" value="1"/>
</dbReference>
<dbReference type="Gene3D" id="3.40.50.300">
    <property type="entry name" value="P-loop containing nucleotide triphosphate hydrolases"/>
    <property type="match status" value="1"/>
</dbReference>
<dbReference type="HAMAP" id="MF_00235">
    <property type="entry name" value="Adenylate_kinase_Adk"/>
    <property type="match status" value="1"/>
</dbReference>
<dbReference type="InterPro" id="IPR006259">
    <property type="entry name" value="Adenyl_kin_sub"/>
</dbReference>
<dbReference type="InterPro" id="IPR000850">
    <property type="entry name" value="Adenylat/UMP-CMP_kin"/>
</dbReference>
<dbReference type="InterPro" id="IPR033690">
    <property type="entry name" value="Adenylat_kinase_CS"/>
</dbReference>
<dbReference type="InterPro" id="IPR007862">
    <property type="entry name" value="Adenylate_kinase_lid-dom"/>
</dbReference>
<dbReference type="InterPro" id="IPR027417">
    <property type="entry name" value="P-loop_NTPase"/>
</dbReference>
<dbReference type="NCBIfam" id="TIGR01351">
    <property type="entry name" value="adk"/>
    <property type="match status" value="1"/>
</dbReference>
<dbReference type="NCBIfam" id="NF001379">
    <property type="entry name" value="PRK00279.1-1"/>
    <property type="match status" value="1"/>
</dbReference>
<dbReference type="NCBIfam" id="NF001380">
    <property type="entry name" value="PRK00279.1-2"/>
    <property type="match status" value="1"/>
</dbReference>
<dbReference type="NCBIfam" id="NF001381">
    <property type="entry name" value="PRK00279.1-3"/>
    <property type="match status" value="1"/>
</dbReference>
<dbReference type="NCBIfam" id="NF011100">
    <property type="entry name" value="PRK14527.1"/>
    <property type="match status" value="1"/>
</dbReference>
<dbReference type="PANTHER" id="PTHR23359">
    <property type="entry name" value="NUCLEOTIDE KINASE"/>
    <property type="match status" value="1"/>
</dbReference>
<dbReference type="Pfam" id="PF00406">
    <property type="entry name" value="ADK"/>
    <property type="match status" value="1"/>
</dbReference>
<dbReference type="Pfam" id="PF05191">
    <property type="entry name" value="ADK_lid"/>
    <property type="match status" value="1"/>
</dbReference>
<dbReference type="PRINTS" id="PR00094">
    <property type="entry name" value="ADENYLTKNASE"/>
</dbReference>
<dbReference type="SUPFAM" id="SSF52540">
    <property type="entry name" value="P-loop containing nucleoside triphosphate hydrolases"/>
    <property type="match status" value="1"/>
</dbReference>
<dbReference type="PROSITE" id="PS00113">
    <property type="entry name" value="ADENYLATE_KINASE"/>
    <property type="match status" value="1"/>
</dbReference>
<evidence type="ECO:0000255" key="1">
    <source>
        <dbReference type="HAMAP-Rule" id="MF_00235"/>
    </source>
</evidence>
<name>KAD_BURL3</name>
<keyword id="KW-0067">ATP-binding</keyword>
<keyword id="KW-0963">Cytoplasm</keyword>
<keyword id="KW-0418">Kinase</keyword>
<keyword id="KW-0545">Nucleotide biosynthesis</keyword>
<keyword id="KW-0547">Nucleotide-binding</keyword>
<keyword id="KW-0808">Transferase</keyword>
<gene>
    <name evidence="1" type="primary">adk</name>
    <name type="ordered locus">Bcep18194_A5879</name>
</gene>
<feature type="chain" id="PRO_1000058804" description="Adenylate kinase">
    <location>
        <begin position="1"/>
        <end position="220"/>
    </location>
</feature>
<feature type="region of interest" description="NMP" evidence="1">
    <location>
        <begin position="30"/>
        <end position="59"/>
    </location>
</feature>
<feature type="region of interest" description="LID" evidence="1">
    <location>
        <begin position="122"/>
        <end position="159"/>
    </location>
</feature>
<feature type="binding site" evidence="1">
    <location>
        <begin position="10"/>
        <end position="15"/>
    </location>
    <ligand>
        <name>ATP</name>
        <dbReference type="ChEBI" id="CHEBI:30616"/>
    </ligand>
</feature>
<feature type="binding site" evidence="1">
    <location>
        <position position="31"/>
    </location>
    <ligand>
        <name>AMP</name>
        <dbReference type="ChEBI" id="CHEBI:456215"/>
    </ligand>
</feature>
<feature type="binding site" evidence="1">
    <location>
        <position position="36"/>
    </location>
    <ligand>
        <name>AMP</name>
        <dbReference type="ChEBI" id="CHEBI:456215"/>
    </ligand>
</feature>
<feature type="binding site" evidence="1">
    <location>
        <begin position="57"/>
        <end position="59"/>
    </location>
    <ligand>
        <name>AMP</name>
        <dbReference type="ChEBI" id="CHEBI:456215"/>
    </ligand>
</feature>
<feature type="binding site" evidence="1">
    <location>
        <begin position="85"/>
        <end position="88"/>
    </location>
    <ligand>
        <name>AMP</name>
        <dbReference type="ChEBI" id="CHEBI:456215"/>
    </ligand>
</feature>
<feature type="binding site" evidence="1">
    <location>
        <position position="92"/>
    </location>
    <ligand>
        <name>AMP</name>
        <dbReference type="ChEBI" id="CHEBI:456215"/>
    </ligand>
</feature>
<feature type="binding site" evidence="1">
    <location>
        <position position="123"/>
    </location>
    <ligand>
        <name>ATP</name>
        <dbReference type="ChEBI" id="CHEBI:30616"/>
    </ligand>
</feature>
<feature type="binding site" evidence="1">
    <location>
        <begin position="132"/>
        <end position="133"/>
    </location>
    <ligand>
        <name>ATP</name>
        <dbReference type="ChEBI" id="CHEBI:30616"/>
    </ligand>
</feature>
<feature type="binding site" evidence="1">
    <location>
        <position position="156"/>
    </location>
    <ligand>
        <name>AMP</name>
        <dbReference type="ChEBI" id="CHEBI:456215"/>
    </ligand>
</feature>
<feature type="binding site" evidence="1">
    <location>
        <position position="167"/>
    </location>
    <ligand>
        <name>AMP</name>
        <dbReference type="ChEBI" id="CHEBI:456215"/>
    </ligand>
</feature>
<feature type="binding site" evidence="1">
    <location>
        <position position="206"/>
    </location>
    <ligand>
        <name>ATP</name>
        <dbReference type="ChEBI" id="CHEBI:30616"/>
    </ligand>
</feature>
<reference key="1">
    <citation type="submission" date="2005-10" db="EMBL/GenBank/DDBJ databases">
        <title>Complete sequence of chromosome 1 of Burkholderia sp. 383.</title>
        <authorList>
            <consortium name="US DOE Joint Genome Institute"/>
            <person name="Copeland A."/>
            <person name="Lucas S."/>
            <person name="Lapidus A."/>
            <person name="Barry K."/>
            <person name="Detter J.C."/>
            <person name="Glavina T."/>
            <person name="Hammon N."/>
            <person name="Israni S."/>
            <person name="Pitluck S."/>
            <person name="Chain P."/>
            <person name="Malfatti S."/>
            <person name="Shin M."/>
            <person name="Vergez L."/>
            <person name="Schmutz J."/>
            <person name="Larimer F."/>
            <person name="Land M."/>
            <person name="Kyrpides N."/>
            <person name="Lykidis A."/>
            <person name="Richardson P."/>
        </authorList>
    </citation>
    <scope>NUCLEOTIDE SEQUENCE [LARGE SCALE GENOMIC DNA]</scope>
    <source>
        <strain>ATCC 17760 / DSM 23089 / LMG 22485 / NCIMB 9086 / R18194 / 383</strain>
    </source>
</reference>